<evidence type="ECO:0000255" key="1">
    <source>
        <dbReference type="HAMAP-Rule" id="MF_00353"/>
    </source>
</evidence>
<evidence type="ECO:0000256" key="2">
    <source>
        <dbReference type="SAM" id="MobiDB-lite"/>
    </source>
</evidence>
<comment type="function">
    <text evidence="1">Component of the dark-operative protochlorophyllide reductase (DPOR) that uses Mg-ATP and reduced ferredoxin to reduce ring D of protochlorophyllide (Pchlide) to form chlorophyllide a (Chlide). This reaction is light-independent. The NB-protein (BchN-BchB) is the catalytic component of the complex.</text>
</comment>
<comment type="catalytic activity">
    <reaction evidence="1">
        <text>chlorophyllide a + oxidized 2[4Fe-4S]-[ferredoxin] + 2 ADP + 2 phosphate = protochlorophyllide a + reduced 2[4Fe-4S]-[ferredoxin] + 2 ATP + 2 H2O</text>
        <dbReference type="Rhea" id="RHEA:28202"/>
        <dbReference type="Rhea" id="RHEA-COMP:10002"/>
        <dbReference type="Rhea" id="RHEA-COMP:10004"/>
        <dbReference type="ChEBI" id="CHEBI:15377"/>
        <dbReference type="ChEBI" id="CHEBI:30616"/>
        <dbReference type="ChEBI" id="CHEBI:33722"/>
        <dbReference type="ChEBI" id="CHEBI:33723"/>
        <dbReference type="ChEBI" id="CHEBI:43474"/>
        <dbReference type="ChEBI" id="CHEBI:83348"/>
        <dbReference type="ChEBI" id="CHEBI:83350"/>
        <dbReference type="ChEBI" id="CHEBI:456216"/>
        <dbReference type="EC" id="1.3.7.7"/>
    </reaction>
</comment>
<comment type="cofactor">
    <cofactor evidence="1">
        <name>[4Fe-4S] cluster</name>
        <dbReference type="ChEBI" id="CHEBI:49883"/>
    </cofactor>
    <text evidence="1">Binds 1 [4Fe-4S] cluster per heterodimer. The cluster is bound at the heterodimer interface by residues from both subunits.</text>
</comment>
<comment type="pathway">
    <text evidence="1">Porphyrin-containing compound metabolism; bacteriochlorophyll biosynthesis (light-independent).</text>
</comment>
<comment type="subunit">
    <text evidence="1">Protochlorophyllide reductase is composed of three subunits; BchL, BchN and BchB. Forms a heterotetramer of two BchB and two BchN subunits.</text>
</comment>
<comment type="similarity">
    <text evidence="1">Belongs to the ChlB/BchB/BchZ family.</text>
</comment>
<protein>
    <recommendedName>
        <fullName evidence="1">Light-independent protochlorophyllide reductase subunit B</fullName>
        <shortName evidence="1">DPOR subunit B</shortName>
        <shortName evidence="1">LI-POR subunit B</shortName>
        <ecNumber evidence="1">1.3.7.7</ecNumber>
    </recommendedName>
</protein>
<accession>Q28W35</accession>
<organism>
    <name type="scientific">Jannaschia sp. (strain CCS1)</name>
    <dbReference type="NCBI Taxonomy" id="290400"/>
    <lineage>
        <taxon>Bacteria</taxon>
        <taxon>Pseudomonadati</taxon>
        <taxon>Pseudomonadota</taxon>
        <taxon>Alphaproteobacteria</taxon>
        <taxon>Rhodobacterales</taxon>
        <taxon>Roseobacteraceae</taxon>
        <taxon>Jannaschia</taxon>
    </lineage>
</organism>
<gene>
    <name evidence="1" type="primary">bchB</name>
    <name type="ordered locus">Jann_0160</name>
</gene>
<proteinExistence type="inferred from homology"/>
<keyword id="KW-0004">4Fe-4S</keyword>
<keyword id="KW-0067">ATP-binding</keyword>
<keyword id="KW-0077">Bacteriochlorophyll biosynthesis</keyword>
<keyword id="KW-0149">Chlorophyll biosynthesis</keyword>
<keyword id="KW-0408">Iron</keyword>
<keyword id="KW-0411">Iron-sulfur</keyword>
<keyword id="KW-0479">Metal-binding</keyword>
<keyword id="KW-0547">Nucleotide-binding</keyword>
<keyword id="KW-0560">Oxidoreductase</keyword>
<keyword id="KW-0602">Photosynthesis</keyword>
<keyword id="KW-1185">Reference proteome</keyword>
<dbReference type="EC" id="1.3.7.7" evidence="1"/>
<dbReference type="EMBL" id="CP000264">
    <property type="protein sequence ID" value="ABD53077.1"/>
    <property type="molecule type" value="Genomic_DNA"/>
</dbReference>
<dbReference type="RefSeq" id="WP_011453286.1">
    <property type="nucleotide sequence ID" value="NC_007802.1"/>
</dbReference>
<dbReference type="SMR" id="Q28W35"/>
<dbReference type="STRING" id="290400.Jann_0160"/>
<dbReference type="KEGG" id="jan:Jann_0160"/>
<dbReference type="eggNOG" id="COG2710">
    <property type="taxonomic scope" value="Bacteria"/>
</dbReference>
<dbReference type="HOGENOM" id="CLU_025470_0_0_5"/>
<dbReference type="OrthoDB" id="5717231at2"/>
<dbReference type="UniPathway" id="UPA00671"/>
<dbReference type="Proteomes" id="UP000008326">
    <property type="component" value="Chromosome"/>
</dbReference>
<dbReference type="GO" id="GO:0051539">
    <property type="term" value="F:4 iron, 4 sulfur cluster binding"/>
    <property type="evidence" value="ECO:0007669"/>
    <property type="project" value="UniProtKB-UniRule"/>
</dbReference>
<dbReference type="GO" id="GO:0005524">
    <property type="term" value="F:ATP binding"/>
    <property type="evidence" value="ECO:0007669"/>
    <property type="project" value="UniProtKB-UniRule"/>
</dbReference>
<dbReference type="GO" id="GO:0046872">
    <property type="term" value="F:metal ion binding"/>
    <property type="evidence" value="ECO:0007669"/>
    <property type="project" value="UniProtKB-KW"/>
</dbReference>
<dbReference type="GO" id="GO:0016730">
    <property type="term" value="F:oxidoreductase activity, acting on iron-sulfur proteins as donors"/>
    <property type="evidence" value="ECO:0007669"/>
    <property type="project" value="InterPro"/>
</dbReference>
<dbReference type="GO" id="GO:0016636">
    <property type="term" value="F:oxidoreductase activity, acting on the CH-CH group of donors, iron-sulfur protein as acceptor"/>
    <property type="evidence" value="ECO:0007669"/>
    <property type="project" value="UniProtKB-UniRule"/>
</dbReference>
<dbReference type="GO" id="GO:0036070">
    <property type="term" value="P:light-independent bacteriochlorophyll biosynthetic process"/>
    <property type="evidence" value="ECO:0007669"/>
    <property type="project" value="UniProtKB-UniRule"/>
</dbReference>
<dbReference type="GO" id="GO:0019685">
    <property type="term" value="P:photosynthesis, dark reaction"/>
    <property type="evidence" value="ECO:0007669"/>
    <property type="project" value="InterPro"/>
</dbReference>
<dbReference type="Gene3D" id="1.20.89.20">
    <property type="match status" value="1"/>
</dbReference>
<dbReference type="Gene3D" id="3.40.50.1980">
    <property type="entry name" value="Nitrogenase molybdenum iron protein domain"/>
    <property type="match status" value="3"/>
</dbReference>
<dbReference type="Gene3D" id="1.10.8.550">
    <property type="entry name" value="Proto-chlorophyllide reductase 57 kD subunit B"/>
    <property type="match status" value="1"/>
</dbReference>
<dbReference type="HAMAP" id="MF_00353">
    <property type="entry name" value="ChlB_BchB"/>
    <property type="match status" value="1"/>
</dbReference>
<dbReference type="InterPro" id="IPR050152">
    <property type="entry name" value="ChlB/BchB/BchZ"/>
</dbReference>
<dbReference type="InterPro" id="IPR013580">
    <property type="entry name" value="LI-POR_suB-like_C"/>
</dbReference>
<dbReference type="InterPro" id="IPR000510">
    <property type="entry name" value="Nase/OxRdtase_comp1"/>
</dbReference>
<dbReference type="InterPro" id="IPR042298">
    <property type="entry name" value="P-CP_red_C"/>
</dbReference>
<dbReference type="InterPro" id="IPR005969">
    <property type="entry name" value="Protochl_reductB"/>
</dbReference>
<dbReference type="InterPro" id="IPR016209">
    <property type="entry name" value="Protochlorophyllide_Rdtase"/>
</dbReference>
<dbReference type="NCBIfam" id="TIGR01278">
    <property type="entry name" value="DPOR_BchB"/>
    <property type="match status" value="1"/>
</dbReference>
<dbReference type="PANTHER" id="PTHR33712">
    <property type="entry name" value="LIGHT-INDEPENDENT PROTOCHLOROPHYLLIDE REDUCTASE SUBUNIT B"/>
    <property type="match status" value="1"/>
</dbReference>
<dbReference type="PANTHER" id="PTHR33712:SF7">
    <property type="entry name" value="LIGHT-INDEPENDENT PROTOCHLOROPHYLLIDE REDUCTASE SUBUNIT B"/>
    <property type="match status" value="1"/>
</dbReference>
<dbReference type="Pfam" id="PF00148">
    <property type="entry name" value="Oxidored_nitro"/>
    <property type="match status" value="1"/>
</dbReference>
<dbReference type="Pfam" id="PF08369">
    <property type="entry name" value="PCP_red"/>
    <property type="match status" value="1"/>
</dbReference>
<dbReference type="PIRSF" id="PIRSF000163">
    <property type="entry name" value="PCP_ChlB"/>
    <property type="match status" value="1"/>
</dbReference>
<dbReference type="SUPFAM" id="SSF53807">
    <property type="entry name" value="Helical backbone' metal receptor"/>
    <property type="match status" value="1"/>
</dbReference>
<sequence>MKLTVWTYEGPPHVGAMRVATAMKGLHYVLHAPQGDTYADLLFTMIERRDHRPPVTYTTFEGRDLGEDTAGIFKVTCQEAYDRFKPQAIIVGASCTAELIQDDPGGLAETMQIPVPVIPLELPSYQRKENFGSDETFYQIVKSLARPMDRTPEVTVNIIGPLALGFRHRDDIEEVKGLLYEMGIGVNVVAPFDATPEDITRLGAAHANVLMYPEHAESAARHLERICGQPYTKTIPIGVAATHEFVAEVAQLCGVEPRKDLSRLRQPWWSKSVDSTYLTGKRVFLFGDATHVKAAARIARDEMGFEVVGLGCYNREFARSIRELAREFDVPALITDDYLEVEKAIEDASPEMILGTQMERHIGKRLGIPCAVISAPVHVQDFPARYSPQMGWEGANVIFDTWIHPLVMGLEEHLLSMFREDFEFHDEAGPSHHGGHSPKPSEAARTPDKVEERADPAPEAPQTGSDVMVWLSEAEKELKKIPFFVRGKARRNTEKFAADQGLQEISLDTLYEAKAHYAR</sequence>
<name>BCHB_JANSC</name>
<reference key="1">
    <citation type="submission" date="2006-02" db="EMBL/GenBank/DDBJ databases">
        <title>Complete sequence of chromosome of Jannaschia sp. CCS1.</title>
        <authorList>
            <consortium name="US DOE Joint Genome Institute"/>
            <person name="Copeland A."/>
            <person name="Lucas S."/>
            <person name="Lapidus A."/>
            <person name="Barry K."/>
            <person name="Detter J.C."/>
            <person name="Glavina del Rio T."/>
            <person name="Hammon N."/>
            <person name="Israni S."/>
            <person name="Pitluck S."/>
            <person name="Brettin T."/>
            <person name="Bruce D."/>
            <person name="Han C."/>
            <person name="Tapia R."/>
            <person name="Gilna P."/>
            <person name="Chertkov O."/>
            <person name="Saunders E."/>
            <person name="Schmutz J."/>
            <person name="Larimer F."/>
            <person name="Land M."/>
            <person name="Kyrpides N."/>
            <person name="Lykidis A."/>
            <person name="Moran M.A."/>
            <person name="Belas R."/>
            <person name="Ye W."/>
            <person name="Buchan A."/>
            <person name="Gonzalez J.M."/>
            <person name="Schell M.A."/>
            <person name="Richardson P."/>
        </authorList>
    </citation>
    <scope>NUCLEOTIDE SEQUENCE [LARGE SCALE GENOMIC DNA]</scope>
    <source>
        <strain>CCS1</strain>
    </source>
</reference>
<feature type="chain" id="PRO_1000048404" description="Light-independent protochlorophyllide reductase subunit B">
    <location>
        <begin position="1"/>
        <end position="519"/>
    </location>
</feature>
<feature type="region of interest" description="Disordered" evidence="2">
    <location>
        <begin position="426"/>
        <end position="465"/>
    </location>
</feature>
<feature type="compositionally biased region" description="Basic and acidic residues" evidence="2">
    <location>
        <begin position="445"/>
        <end position="456"/>
    </location>
</feature>
<feature type="active site" description="Proton donor" evidence="1">
    <location>
        <position position="274"/>
    </location>
</feature>
<feature type="binding site" evidence="1">
    <location>
        <position position="36"/>
    </location>
    <ligand>
        <name>[4Fe-4S] cluster</name>
        <dbReference type="ChEBI" id="CHEBI:49883"/>
        <note>ligand shared with heterodimeric partner</note>
    </ligand>
</feature>
<feature type="binding site" evidence="1">
    <location>
        <begin position="409"/>
        <end position="410"/>
    </location>
    <ligand>
        <name>substrate</name>
    </ligand>
</feature>